<sequence length="368" mass="42472">MGKGFGLLRKPCQSVVAEPQQYSALEEERTMKRKRVLSRDLCSAWDSPHGLVGLHNIGQTCCLNSLLQVFMMNMDFRMILKRITVPRSAEERKRSVPFQLLLLLEKMQDSRQKAVLPTELVQCLQKYNVPLFVQHDAAQLYLTIWNLTKDQITDTDLTERLQGLFTIWTQESLICVGCTAESSRRSKLLTLSLPLFDKDAKPLKTLEDALRCFVQPKELASSDMCCESCGEKTPWKQVLKLTHLPQTLTIHLMRFSARNSRTEKICHSVNFPQSLDFSQVLPTEEDLGDTKEQSEIHYELFAVIAHVGMADFGHYCAYIRNPVDGKWFCFNDSHVCWVTWKDVQCTYGNHRYRWRETAYLLVYTKTGS</sequence>
<accession>Q9WTV6</accession>
<accession>Q3U7P3</accession>
<evidence type="ECO:0000250" key="1">
    <source>
        <dbReference type="UniProtKB" id="Q9UMW8"/>
    </source>
</evidence>
<evidence type="ECO:0000255" key="2"/>
<evidence type="ECO:0000255" key="3">
    <source>
        <dbReference type="PROSITE-ProRule" id="PRU10092"/>
    </source>
</evidence>
<evidence type="ECO:0000255" key="4">
    <source>
        <dbReference type="PROSITE-ProRule" id="PRU10093"/>
    </source>
</evidence>
<evidence type="ECO:0000269" key="5">
    <source>
    </source>
</evidence>
<evidence type="ECO:0000305" key="6"/>
<evidence type="ECO:0007829" key="7">
    <source>
        <dbReference type="PDB" id="5CHT"/>
    </source>
</evidence>
<evidence type="ECO:0007829" key="8">
    <source>
        <dbReference type="PDB" id="5CHV"/>
    </source>
</evidence>
<proteinExistence type="evidence at protein level"/>
<reference key="1">
    <citation type="journal article" date="1999" name="Mol. Cell. Biol.">
        <title>A novel ubiquitin-specific protease, UBP43, cloned from leukemia fusion protein AML1-ETO-expressing mice, functions in hematopoietic cell differentiation.</title>
        <authorList>
            <person name="Liu L."/>
            <person name="Ilaria R. Jr."/>
            <person name="Kingsley P.D."/>
            <person name="Iwama A."/>
            <person name="van Etten R.A."/>
            <person name="Palis J."/>
            <person name="Zhang D.-E."/>
        </authorList>
    </citation>
    <scope>NUCLEOTIDE SEQUENCE [MRNA]</scope>
    <source>
        <tissue>Thymus</tissue>
    </source>
</reference>
<reference key="2">
    <citation type="journal article" date="2005" name="Science">
        <title>The transcriptional landscape of the mammalian genome.</title>
        <authorList>
            <person name="Carninci P."/>
            <person name="Kasukawa T."/>
            <person name="Katayama S."/>
            <person name="Gough J."/>
            <person name="Frith M.C."/>
            <person name="Maeda N."/>
            <person name="Oyama R."/>
            <person name="Ravasi T."/>
            <person name="Lenhard B."/>
            <person name="Wells C."/>
            <person name="Kodzius R."/>
            <person name="Shimokawa K."/>
            <person name="Bajic V.B."/>
            <person name="Brenner S.E."/>
            <person name="Batalov S."/>
            <person name="Forrest A.R."/>
            <person name="Zavolan M."/>
            <person name="Davis M.J."/>
            <person name="Wilming L.G."/>
            <person name="Aidinis V."/>
            <person name="Allen J.E."/>
            <person name="Ambesi-Impiombato A."/>
            <person name="Apweiler R."/>
            <person name="Aturaliya R.N."/>
            <person name="Bailey T.L."/>
            <person name="Bansal M."/>
            <person name="Baxter L."/>
            <person name="Beisel K.W."/>
            <person name="Bersano T."/>
            <person name="Bono H."/>
            <person name="Chalk A.M."/>
            <person name="Chiu K.P."/>
            <person name="Choudhary V."/>
            <person name="Christoffels A."/>
            <person name="Clutterbuck D.R."/>
            <person name="Crowe M.L."/>
            <person name="Dalla E."/>
            <person name="Dalrymple B.P."/>
            <person name="de Bono B."/>
            <person name="Della Gatta G."/>
            <person name="di Bernardo D."/>
            <person name="Down T."/>
            <person name="Engstrom P."/>
            <person name="Fagiolini M."/>
            <person name="Faulkner G."/>
            <person name="Fletcher C.F."/>
            <person name="Fukushima T."/>
            <person name="Furuno M."/>
            <person name="Futaki S."/>
            <person name="Gariboldi M."/>
            <person name="Georgii-Hemming P."/>
            <person name="Gingeras T.R."/>
            <person name="Gojobori T."/>
            <person name="Green R.E."/>
            <person name="Gustincich S."/>
            <person name="Harbers M."/>
            <person name="Hayashi Y."/>
            <person name="Hensch T.K."/>
            <person name="Hirokawa N."/>
            <person name="Hill D."/>
            <person name="Huminiecki L."/>
            <person name="Iacono M."/>
            <person name="Ikeo K."/>
            <person name="Iwama A."/>
            <person name="Ishikawa T."/>
            <person name="Jakt M."/>
            <person name="Kanapin A."/>
            <person name="Katoh M."/>
            <person name="Kawasawa Y."/>
            <person name="Kelso J."/>
            <person name="Kitamura H."/>
            <person name="Kitano H."/>
            <person name="Kollias G."/>
            <person name="Krishnan S.P."/>
            <person name="Kruger A."/>
            <person name="Kummerfeld S.K."/>
            <person name="Kurochkin I.V."/>
            <person name="Lareau L.F."/>
            <person name="Lazarevic D."/>
            <person name="Lipovich L."/>
            <person name="Liu J."/>
            <person name="Liuni S."/>
            <person name="McWilliam S."/>
            <person name="Madan Babu M."/>
            <person name="Madera M."/>
            <person name="Marchionni L."/>
            <person name="Matsuda H."/>
            <person name="Matsuzawa S."/>
            <person name="Miki H."/>
            <person name="Mignone F."/>
            <person name="Miyake S."/>
            <person name="Morris K."/>
            <person name="Mottagui-Tabar S."/>
            <person name="Mulder N."/>
            <person name="Nakano N."/>
            <person name="Nakauchi H."/>
            <person name="Ng P."/>
            <person name="Nilsson R."/>
            <person name="Nishiguchi S."/>
            <person name="Nishikawa S."/>
            <person name="Nori F."/>
            <person name="Ohara O."/>
            <person name="Okazaki Y."/>
            <person name="Orlando V."/>
            <person name="Pang K.C."/>
            <person name="Pavan W.J."/>
            <person name="Pavesi G."/>
            <person name="Pesole G."/>
            <person name="Petrovsky N."/>
            <person name="Piazza S."/>
            <person name="Reed J."/>
            <person name="Reid J.F."/>
            <person name="Ring B.Z."/>
            <person name="Ringwald M."/>
            <person name="Rost B."/>
            <person name="Ruan Y."/>
            <person name="Salzberg S.L."/>
            <person name="Sandelin A."/>
            <person name="Schneider C."/>
            <person name="Schoenbach C."/>
            <person name="Sekiguchi K."/>
            <person name="Semple C.A."/>
            <person name="Seno S."/>
            <person name="Sessa L."/>
            <person name="Sheng Y."/>
            <person name="Shibata Y."/>
            <person name="Shimada H."/>
            <person name="Shimada K."/>
            <person name="Silva D."/>
            <person name="Sinclair B."/>
            <person name="Sperling S."/>
            <person name="Stupka E."/>
            <person name="Sugiura K."/>
            <person name="Sultana R."/>
            <person name="Takenaka Y."/>
            <person name="Taki K."/>
            <person name="Tammoja K."/>
            <person name="Tan S.L."/>
            <person name="Tang S."/>
            <person name="Taylor M.S."/>
            <person name="Tegner J."/>
            <person name="Teichmann S.A."/>
            <person name="Ueda H.R."/>
            <person name="van Nimwegen E."/>
            <person name="Verardo R."/>
            <person name="Wei C.L."/>
            <person name="Yagi K."/>
            <person name="Yamanishi H."/>
            <person name="Zabarovsky E."/>
            <person name="Zhu S."/>
            <person name="Zimmer A."/>
            <person name="Hide W."/>
            <person name="Bult C."/>
            <person name="Grimmond S.M."/>
            <person name="Teasdale R.D."/>
            <person name="Liu E.T."/>
            <person name="Brusic V."/>
            <person name="Quackenbush J."/>
            <person name="Wahlestedt C."/>
            <person name="Mattick J.S."/>
            <person name="Hume D.A."/>
            <person name="Kai C."/>
            <person name="Sasaki D."/>
            <person name="Tomaru Y."/>
            <person name="Fukuda S."/>
            <person name="Kanamori-Katayama M."/>
            <person name="Suzuki M."/>
            <person name="Aoki J."/>
            <person name="Arakawa T."/>
            <person name="Iida J."/>
            <person name="Imamura K."/>
            <person name="Itoh M."/>
            <person name="Kato T."/>
            <person name="Kawaji H."/>
            <person name="Kawagashira N."/>
            <person name="Kawashima T."/>
            <person name="Kojima M."/>
            <person name="Kondo S."/>
            <person name="Konno H."/>
            <person name="Nakano K."/>
            <person name="Ninomiya N."/>
            <person name="Nishio T."/>
            <person name="Okada M."/>
            <person name="Plessy C."/>
            <person name="Shibata K."/>
            <person name="Shiraki T."/>
            <person name="Suzuki S."/>
            <person name="Tagami M."/>
            <person name="Waki K."/>
            <person name="Watahiki A."/>
            <person name="Okamura-Oho Y."/>
            <person name="Suzuki H."/>
            <person name="Kawai J."/>
            <person name="Hayashizaki Y."/>
        </authorList>
    </citation>
    <scope>NUCLEOTIDE SEQUENCE [LARGE SCALE MRNA]</scope>
    <source>
        <strain>C57BL/6J</strain>
        <tissue>Bone marrow</tissue>
    </source>
</reference>
<reference key="3">
    <citation type="journal article" date="2002" name="J. Biol. Chem.">
        <title>UBP43 (USP18) specifically removes ISG15 from conjugated proteins.</title>
        <authorList>
            <person name="Malakhov M.P."/>
            <person name="Malakhova O.A."/>
            <person name="Kim K.I."/>
            <person name="Ritchie K.J."/>
            <person name="Zhang D.-E."/>
        </authorList>
    </citation>
    <scope>FUNCTION</scope>
    <scope>DISRUPTION PHENOTYPE</scope>
</reference>
<protein>
    <recommendedName>
        <fullName>Ubl carboxyl-terminal hydrolase 18</fullName>
        <ecNumber evidence="1">3.4.19.12</ecNumber>
    </recommendedName>
    <alternativeName>
        <fullName>43 kDa ISG15-specific protease</fullName>
    </alternativeName>
    <alternativeName>
        <fullName>ISG15-specific-processing protease</fullName>
    </alternativeName>
    <alternativeName>
        <fullName>Ubl thioesterase 18</fullName>
    </alternativeName>
</protein>
<organism>
    <name type="scientific">Mus musculus</name>
    <name type="common">Mouse</name>
    <dbReference type="NCBI Taxonomy" id="10090"/>
    <lineage>
        <taxon>Eukaryota</taxon>
        <taxon>Metazoa</taxon>
        <taxon>Chordata</taxon>
        <taxon>Craniata</taxon>
        <taxon>Vertebrata</taxon>
        <taxon>Euteleostomi</taxon>
        <taxon>Mammalia</taxon>
        <taxon>Eutheria</taxon>
        <taxon>Euarchontoglires</taxon>
        <taxon>Glires</taxon>
        <taxon>Rodentia</taxon>
        <taxon>Myomorpha</taxon>
        <taxon>Muroidea</taxon>
        <taxon>Muridae</taxon>
        <taxon>Murinae</taxon>
        <taxon>Mus</taxon>
        <taxon>Mus</taxon>
    </lineage>
</organism>
<feature type="chain" id="PRO_0000080645" description="Ubl carboxyl-terminal hydrolase 18">
    <location>
        <begin position="1"/>
        <end position="368"/>
    </location>
</feature>
<feature type="domain" description="USP" evidence="2">
    <location>
        <begin position="52"/>
        <end position="366"/>
    </location>
</feature>
<feature type="region of interest" description="Mediates interaction with IFNAR2" evidence="1">
    <location>
        <begin position="31"/>
        <end position="48"/>
    </location>
</feature>
<feature type="region of interest" description="Mediates interaction with STAT2" evidence="1">
    <location>
        <begin position="48"/>
        <end position="109"/>
    </location>
</feature>
<feature type="region of interest" description="Mediates interaction with STAT2 and necessary for the negative regulation of the type I IFN signaling pathway" evidence="1">
    <location>
        <begin position="299"/>
        <end position="308"/>
    </location>
</feature>
<feature type="region of interest" description="Mediates interaction with IFNAR2" evidence="1">
    <location>
        <begin position="309"/>
        <end position="368"/>
    </location>
</feature>
<feature type="active site" description="Nucleophile" evidence="3 4">
    <location>
        <position position="61"/>
    </location>
</feature>
<feature type="active site" description="Proton acceptor" evidence="3 4">
    <location>
        <position position="314"/>
    </location>
</feature>
<feature type="sequence conflict" description="In Ref. 1; AAD21222." evidence="6" ref="1">
    <original>V</original>
    <variation>L</variation>
    <location>
        <position position="115"/>
    </location>
</feature>
<feature type="sequence conflict" description="In Ref. 1; AAD21222." evidence="6" ref="1">
    <original>S</original>
    <variation>T</variation>
    <location>
        <position position="228"/>
    </location>
</feature>
<feature type="strand" evidence="7">
    <location>
        <begin position="46"/>
        <end position="50"/>
    </location>
</feature>
<feature type="strand" evidence="7">
    <location>
        <begin position="57"/>
        <end position="59"/>
    </location>
</feature>
<feature type="helix" evidence="7">
    <location>
        <begin position="61"/>
        <end position="71"/>
    </location>
</feature>
<feature type="helix" evidence="7">
    <location>
        <begin position="74"/>
        <end position="81"/>
    </location>
</feature>
<feature type="helix" evidence="7">
    <location>
        <begin position="89"/>
        <end position="94"/>
    </location>
</feature>
<feature type="helix" evidence="7">
    <location>
        <begin position="96"/>
        <end position="109"/>
    </location>
</feature>
<feature type="strand" evidence="7">
    <location>
        <begin position="112"/>
        <end position="115"/>
    </location>
</feature>
<feature type="helix" evidence="7">
    <location>
        <begin position="118"/>
        <end position="125"/>
    </location>
</feature>
<feature type="helix" evidence="7">
    <location>
        <begin position="131"/>
        <end position="135"/>
    </location>
</feature>
<feature type="helix" evidence="7">
    <location>
        <begin position="137"/>
        <end position="151"/>
    </location>
</feature>
<feature type="helix" evidence="7">
    <location>
        <begin position="155"/>
        <end position="165"/>
    </location>
</feature>
<feature type="strand" evidence="7">
    <location>
        <begin position="167"/>
        <end position="178"/>
    </location>
</feature>
<feature type="strand" evidence="7">
    <location>
        <begin position="183"/>
        <end position="193"/>
    </location>
</feature>
<feature type="helix" evidence="7">
    <location>
        <begin position="206"/>
        <end position="213"/>
    </location>
</feature>
<feature type="strand" evidence="7">
    <location>
        <begin position="217"/>
        <end position="219"/>
    </location>
</feature>
<feature type="turn" evidence="7">
    <location>
        <begin position="227"/>
        <end position="229"/>
    </location>
</feature>
<feature type="strand" evidence="7">
    <location>
        <begin position="235"/>
        <end position="243"/>
    </location>
</feature>
<feature type="strand" evidence="7">
    <location>
        <begin position="246"/>
        <end position="252"/>
    </location>
</feature>
<feature type="strand" evidence="8">
    <location>
        <begin position="255"/>
        <end position="259"/>
    </location>
</feature>
<feature type="strand" evidence="8">
    <location>
        <begin position="261"/>
        <end position="264"/>
    </location>
</feature>
<feature type="strand" evidence="7">
    <location>
        <begin position="273"/>
        <end position="275"/>
    </location>
</feature>
<feature type="strand" evidence="7">
    <location>
        <begin position="298"/>
        <end position="309"/>
    </location>
</feature>
<feature type="strand" evidence="7">
    <location>
        <begin position="312"/>
        <end position="320"/>
    </location>
</feature>
<feature type="turn" evidence="7">
    <location>
        <begin position="322"/>
        <end position="324"/>
    </location>
</feature>
<feature type="strand" evidence="7">
    <location>
        <begin position="327"/>
        <end position="331"/>
    </location>
</feature>
<feature type="strand" evidence="7">
    <location>
        <begin position="334"/>
        <end position="338"/>
    </location>
</feature>
<feature type="helix" evidence="7">
    <location>
        <begin position="340"/>
        <end position="343"/>
    </location>
</feature>
<feature type="helix" evidence="7">
    <location>
        <begin position="344"/>
        <end position="346"/>
    </location>
</feature>
<feature type="strand" evidence="7">
    <location>
        <begin position="350"/>
        <end position="352"/>
    </location>
</feature>
<feature type="strand" evidence="7">
    <location>
        <begin position="357"/>
        <end position="365"/>
    </location>
</feature>
<keyword id="KW-0002">3D-structure</keyword>
<keyword id="KW-0378">Hydrolase</keyword>
<keyword id="KW-0645">Protease</keyword>
<keyword id="KW-1185">Reference proteome</keyword>
<keyword id="KW-0788">Thiol protease</keyword>
<keyword id="KW-0833">Ubl conjugation pathway</keyword>
<comment type="function">
    <text evidence="1 5">Interferon-induced ISG15-specific protease that plays a crucial role for maintaining a proper balance of ISG15-conjugated proteins in cells (PubMed:11788588). Regulates protein ISGylation by efficiently cleaving ISG15 conjugates linked via isopeptide bonds. Regulates T-cell activation and T-helper 17 (Th17) cell differentiation by deubiquitinating TAK1, likely to keep TAK1-TAB complexes in steady conditions. In turn, restricts activation of NF-kappa-B, NFAT, and JNK as well as expression of IL2 in T-cells after TCR activation. Acts as a molecular adapter with USP20 to promote innate antiviral response through deubiquitinating STING1. Involved also in the negative regulation of the inflammatory response triggered by type I interferon. Upon recruitment by STAT2 to the type I interferon receptor subunit IFNAR2 interferes with the assembly of the ternary interferon-IFNAR1-IFNAR2 complex and acts as a negative regulator of the type I interferon signaling pathway.</text>
</comment>
<comment type="catalytic activity">
    <reaction evidence="1">
        <text>Thiol-dependent hydrolysis of ester, thioester, amide, peptide and isopeptide bonds formed by the C-terminal Gly of ubiquitin (a 76-residue protein attached to proteins as an intracellular targeting signal).</text>
        <dbReference type="EC" id="3.4.19.12"/>
    </reaction>
</comment>
<comment type="subunit">
    <text evidence="1">Interacts with STAT2; the interaction is direct. Interacts with IFNAR2; indirectly via STAT2, it negatively regulates the assembly of the ternary interferon-IFNAR1-IFNAR2 complex and inhibits type I interferon signaling. Interacts with STING1. Interacts with USP20.</text>
</comment>
<comment type="interaction">
    <interactant intactId="EBI-9119995">
        <id>Q9WTV6</id>
    </interactant>
    <interactant intactId="EBI-8345781">
        <id>Q64339</id>
        <label>Isg15</label>
    </interactant>
    <organismsDiffer>false</organismsDiffer>
    <experiments>4</experiments>
</comment>
<comment type="disruption phenotype">
    <text evidence="5">USP18-deletion mice display increased levels of intracellular ISG15 conjugates.</text>
</comment>
<comment type="similarity">
    <text evidence="6">Belongs to the peptidase C19 family.</text>
</comment>
<gene>
    <name type="primary">Usp18</name>
    <name type="synonym">Ubp43</name>
</gene>
<dbReference type="EC" id="3.4.19.12" evidence="1"/>
<dbReference type="EMBL" id="AF069502">
    <property type="protein sequence ID" value="AAD21222.1"/>
    <property type="molecule type" value="mRNA"/>
</dbReference>
<dbReference type="EMBL" id="AK152034">
    <property type="protein sequence ID" value="BAE30893.1"/>
    <property type="molecule type" value="mRNA"/>
</dbReference>
<dbReference type="EMBL" id="AK152574">
    <property type="protein sequence ID" value="BAE31326.1"/>
    <property type="molecule type" value="mRNA"/>
</dbReference>
<dbReference type="EMBL" id="AK153312">
    <property type="protein sequence ID" value="BAE31893.1"/>
    <property type="molecule type" value="mRNA"/>
</dbReference>
<dbReference type="CCDS" id="CCDS20489.1"/>
<dbReference type="RefSeq" id="NP_036039.2">
    <property type="nucleotide sequence ID" value="NM_011909.2"/>
</dbReference>
<dbReference type="PDB" id="5CHT">
    <property type="method" value="X-ray"/>
    <property type="resolution" value="2.80 A"/>
    <property type="chains" value="A/B=46-368"/>
</dbReference>
<dbReference type="PDB" id="5CHV">
    <property type="method" value="X-ray"/>
    <property type="resolution" value="3.00 A"/>
    <property type="chains" value="A/B=46-368"/>
</dbReference>
<dbReference type="PDBsum" id="5CHT"/>
<dbReference type="PDBsum" id="5CHV"/>
<dbReference type="SMR" id="Q9WTV6"/>
<dbReference type="BioGRID" id="204902">
    <property type="interactions" value="5"/>
</dbReference>
<dbReference type="FunCoup" id="Q9WTV6">
    <property type="interactions" value="1574"/>
</dbReference>
<dbReference type="IntAct" id="Q9WTV6">
    <property type="interactions" value="1"/>
</dbReference>
<dbReference type="MINT" id="Q9WTV6"/>
<dbReference type="STRING" id="10090.ENSMUSP00000032198"/>
<dbReference type="MEROPS" id="C19.030"/>
<dbReference type="PhosphoSitePlus" id="Q9WTV6"/>
<dbReference type="PaxDb" id="10090-ENSMUSP00000032198"/>
<dbReference type="ProteomicsDB" id="298096"/>
<dbReference type="DNASU" id="24110"/>
<dbReference type="Ensembl" id="ENSMUST00000032198.11">
    <property type="protein sequence ID" value="ENSMUSP00000032198.10"/>
    <property type="gene ID" value="ENSMUSG00000030107.11"/>
</dbReference>
<dbReference type="GeneID" id="24110"/>
<dbReference type="KEGG" id="mmu:24110"/>
<dbReference type="UCSC" id="uc009dog.2">
    <property type="organism name" value="mouse"/>
</dbReference>
<dbReference type="AGR" id="MGI:1344364"/>
<dbReference type="CTD" id="11274"/>
<dbReference type="MGI" id="MGI:1344364">
    <property type="gene designation" value="Usp18"/>
</dbReference>
<dbReference type="VEuPathDB" id="HostDB:ENSMUSG00000030107"/>
<dbReference type="eggNOG" id="KOG1863">
    <property type="taxonomic scope" value="Eukaryota"/>
</dbReference>
<dbReference type="GeneTree" id="ENSGT00940000161720"/>
<dbReference type="HOGENOM" id="CLU_062837_0_0_1"/>
<dbReference type="InParanoid" id="Q9WTV6"/>
<dbReference type="OMA" id="CGRKTPF"/>
<dbReference type="OrthoDB" id="292964at2759"/>
<dbReference type="PhylomeDB" id="Q9WTV6"/>
<dbReference type="Reactome" id="R-MMU-1169408">
    <property type="pathway name" value="ISG15 antiviral mechanism"/>
</dbReference>
<dbReference type="Reactome" id="R-MMU-445989">
    <property type="pathway name" value="TAK1-dependent IKK and NF-kappa-B activation"/>
</dbReference>
<dbReference type="Reactome" id="R-MMU-5689880">
    <property type="pathway name" value="Ub-specific processing proteases"/>
</dbReference>
<dbReference type="Reactome" id="R-MMU-912694">
    <property type="pathway name" value="Regulation of IFNA/IFNB signaling"/>
</dbReference>
<dbReference type="Reactome" id="R-MMU-9758274">
    <property type="pathway name" value="Regulation of NF-kappa B signaling"/>
</dbReference>
<dbReference type="BioGRID-ORCS" id="24110">
    <property type="hits" value="19 hits in 79 CRISPR screens"/>
</dbReference>
<dbReference type="ChiTaRS" id="Usp18">
    <property type="organism name" value="mouse"/>
</dbReference>
<dbReference type="PRO" id="PR:Q9WTV6"/>
<dbReference type="Proteomes" id="UP000000589">
    <property type="component" value="Chromosome 6"/>
</dbReference>
<dbReference type="RNAct" id="Q9WTV6">
    <property type="molecule type" value="protein"/>
</dbReference>
<dbReference type="Bgee" id="ENSMUSG00000030107">
    <property type="expression patterns" value="Expressed in small intestine Peyer's patch and 126 other cell types or tissues"/>
</dbReference>
<dbReference type="ExpressionAtlas" id="Q9WTV6">
    <property type="expression patterns" value="baseline and differential"/>
</dbReference>
<dbReference type="GO" id="GO:0005829">
    <property type="term" value="C:cytosol"/>
    <property type="evidence" value="ECO:0007669"/>
    <property type="project" value="Ensembl"/>
</dbReference>
<dbReference type="GO" id="GO:0005634">
    <property type="term" value="C:nucleus"/>
    <property type="evidence" value="ECO:0007669"/>
    <property type="project" value="Ensembl"/>
</dbReference>
<dbReference type="GO" id="GO:0004843">
    <property type="term" value="F:cysteine-type deubiquitinase activity"/>
    <property type="evidence" value="ECO:0007669"/>
    <property type="project" value="InterPro"/>
</dbReference>
<dbReference type="GO" id="GO:0019785">
    <property type="term" value="F:ISG15-specific peptidase activity"/>
    <property type="evidence" value="ECO:0000315"/>
    <property type="project" value="MGI"/>
</dbReference>
<dbReference type="GO" id="GO:0060090">
    <property type="term" value="F:molecular adaptor activity"/>
    <property type="evidence" value="ECO:0007669"/>
    <property type="project" value="Ensembl"/>
</dbReference>
<dbReference type="GO" id="GO:0140374">
    <property type="term" value="P:antiviral innate immune response"/>
    <property type="evidence" value="ECO:0007669"/>
    <property type="project" value="Ensembl"/>
</dbReference>
<dbReference type="GO" id="GO:0060339">
    <property type="term" value="P:negative regulation of type I interferon-mediated signaling pathway"/>
    <property type="evidence" value="ECO:0000250"/>
    <property type="project" value="UniProtKB"/>
</dbReference>
<dbReference type="GO" id="GO:0016579">
    <property type="term" value="P:protein deubiquitination"/>
    <property type="evidence" value="ECO:0007669"/>
    <property type="project" value="InterPro"/>
</dbReference>
<dbReference type="GO" id="GO:0006508">
    <property type="term" value="P:proteolysis"/>
    <property type="evidence" value="ECO:0007669"/>
    <property type="project" value="UniProtKB-KW"/>
</dbReference>
<dbReference type="GO" id="GO:0050727">
    <property type="term" value="P:regulation of inflammatory response"/>
    <property type="evidence" value="ECO:0000250"/>
    <property type="project" value="UniProtKB"/>
</dbReference>
<dbReference type="GO" id="GO:0009617">
    <property type="term" value="P:response to bacterium"/>
    <property type="evidence" value="ECO:0000270"/>
    <property type="project" value="MGI"/>
</dbReference>
<dbReference type="GO" id="GO:0035634">
    <property type="term" value="P:response to stilbenoid"/>
    <property type="evidence" value="ECO:0000270"/>
    <property type="project" value="UniProtKB"/>
</dbReference>
<dbReference type="CDD" id="cd02257">
    <property type="entry name" value="Peptidase_C19"/>
    <property type="match status" value="1"/>
</dbReference>
<dbReference type="FunFam" id="3.90.70.10:FF:000088">
    <property type="entry name" value="Ubl carboxyl-terminal hydrolase 18"/>
    <property type="match status" value="1"/>
</dbReference>
<dbReference type="Gene3D" id="3.90.70.10">
    <property type="entry name" value="Cysteine proteinases"/>
    <property type="match status" value="1"/>
</dbReference>
<dbReference type="InterPro" id="IPR038765">
    <property type="entry name" value="Papain-like_cys_pep_sf"/>
</dbReference>
<dbReference type="InterPro" id="IPR050164">
    <property type="entry name" value="Peptidase_C19"/>
</dbReference>
<dbReference type="InterPro" id="IPR001394">
    <property type="entry name" value="Peptidase_C19_UCH"/>
</dbReference>
<dbReference type="InterPro" id="IPR018200">
    <property type="entry name" value="USP_CS"/>
</dbReference>
<dbReference type="InterPro" id="IPR028889">
    <property type="entry name" value="USP_dom"/>
</dbReference>
<dbReference type="PANTHER" id="PTHR24006">
    <property type="entry name" value="UBIQUITIN CARBOXYL-TERMINAL HYDROLASE"/>
    <property type="match status" value="1"/>
</dbReference>
<dbReference type="PANTHER" id="PTHR24006:SF796">
    <property type="entry name" value="UBL CARBOXYL-TERMINAL HYDROLASE 18-RELATED"/>
    <property type="match status" value="1"/>
</dbReference>
<dbReference type="Pfam" id="PF00443">
    <property type="entry name" value="UCH"/>
    <property type="match status" value="1"/>
</dbReference>
<dbReference type="SUPFAM" id="SSF54001">
    <property type="entry name" value="Cysteine proteinases"/>
    <property type="match status" value="1"/>
</dbReference>
<dbReference type="PROSITE" id="PS00972">
    <property type="entry name" value="USP_1"/>
    <property type="match status" value="1"/>
</dbReference>
<dbReference type="PROSITE" id="PS00973">
    <property type="entry name" value="USP_2"/>
    <property type="match status" value="1"/>
</dbReference>
<dbReference type="PROSITE" id="PS50235">
    <property type="entry name" value="USP_3"/>
    <property type="match status" value="1"/>
</dbReference>
<name>UBP18_MOUSE</name>